<protein>
    <recommendedName>
        <fullName evidence="1">ATP phosphoribosyltransferase regulatory subunit</fullName>
    </recommendedName>
</protein>
<reference key="1">
    <citation type="submission" date="2006-08" db="EMBL/GenBank/DDBJ databases">
        <title>Complete sequence of chromosome 1 of Burkholderia cenocepacia HI2424.</title>
        <authorList>
            <person name="Copeland A."/>
            <person name="Lucas S."/>
            <person name="Lapidus A."/>
            <person name="Barry K."/>
            <person name="Detter J.C."/>
            <person name="Glavina del Rio T."/>
            <person name="Hammon N."/>
            <person name="Israni S."/>
            <person name="Pitluck S."/>
            <person name="Chain P."/>
            <person name="Malfatti S."/>
            <person name="Shin M."/>
            <person name="Vergez L."/>
            <person name="Schmutz J."/>
            <person name="Larimer F."/>
            <person name="Land M."/>
            <person name="Hauser L."/>
            <person name="Kyrpides N."/>
            <person name="Kim E."/>
            <person name="LiPuma J.J."/>
            <person name="Gonzalez C.F."/>
            <person name="Konstantinidis K."/>
            <person name="Tiedje J.M."/>
            <person name="Richardson P."/>
        </authorList>
    </citation>
    <scope>NUCLEOTIDE SEQUENCE [LARGE SCALE GENOMIC DNA]</scope>
    <source>
        <strain>HI2424</strain>
    </source>
</reference>
<evidence type="ECO:0000255" key="1">
    <source>
        <dbReference type="HAMAP-Rule" id="MF_00125"/>
    </source>
</evidence>
<accession>A0K7S6</accession>
<organism>
    <name type="scientific">Burkholderia cenocepacia (strain HI2424)</name>
    <dbReference type="NCBI Taxonomy" id="331272"/>
    <lineage>
        <taxon>Bacteria</taxon>
        <taxon>Pseudomonadati</taxon>
        <taxon>Pseudomonadota</taxon>
        <taxon>Betaproteobacteria</taxon>
        <taxon>Burkholderiales</taxon>
        <taxon>Burkholderiaceae</taxon>
        <taxon>Burkholderia</taxon>
        <taxon>Burkholderia cepacia complex</taxon>
    </lineage>
</organism>
<gene>
    <name evidence="1" type="primary">hisZ</name>
    <name type="ordered locus">Bcen2424_1802</name>
</gene>
<sequence>MSTWLLPENIADVLPSEARKIEELRRRLLDRFRSYGYEMVMPPLLEYLESLLTSGGADLRLRTFKLVDQLSGRTLGLRADITPQVARIDAHLLNRQGVTRLCYAGHVMHTRPRGLHATREQIQIGAEIYGHAGLEADLEIQQLMLDALHLAGLSRIRLDLGHAGVLAALLARDAQAAERGESLYDALSGKDVPLLNELTDDLGADTRAALRALPNLYGDASVLAEARTRLPVLPEITRALDDLAQLASQAKGVEVAIDLADLRGYAYHSGAMFSAYIDGVPNAIARGGRYDHVGQAYGRSRPATGFSLDLRELARISPVEARGTAILAPWAQDDALGAAVAALRDAGEVVIQALPGHDHVLDEFACDRSLVERNGAWVVEPR</sequence>
<name>HISZ_BURCH</name>
<feature type="chain" id="PRO_1000016248" description="ATP phosphoribosyltransferase regulatory subunit">
    <location>
        <begin position="1"/>
        <end position="382"/>
    </location>
</feature>
<keyword id="KW-0028">Amino-acid biosynthesis</keyword>
<keyword id="KW-0963">Cytoplasm</keyword>
<keyword id="KW-0368">Histidine biosynthesis</keyword>
<comment type="function">
    <text evidence="1">Required for the first step of histidine biosynthesis. May allow the feedback regulation of ATP phosphoribosyltransferase activity by histidine.</text>
</comment>
<comment type="pathway">
    <text evidence="1">Amino-acid biosynthesis; L-histidine biosynthesis; L-histidine from 5-phospho-alpha-D-ribose 1-diphosphate: step 1/9.</text>
</comment>
<comment type="subunit">
    <text evidence="1">Heteromultimer composed of HisG and HisZ subunits.</text>
</comment>
<comment type="subcellular location">
    <subcellularLocation>
        <location evidence="1">Cytoplasm</location>
    </subcellularLocation>
</comment>
<comment type="miscellaneous">
    <text>This function is generally fulfilled by the C-terminal part of HisG, which is missing in some bacteria such as this one.</text>
</comment>
<comment type="similarity">
    <text evidence="1">Belongs to the class-II aminoacyl-tRNA synthetase family. HisZ subfamily.</text>
</comment>
<proteinExistence type="inferred from homology"/>
<dbReference type="EMBL" id="CP000458">
    <property type="protein sequence ID" value="ABK08553.1"/>
    <property type="molecule type" value="Genomic_DNA"/>
</dbReference>
<dbReference type="RefSeq" id="WP_011549695.1">
    <property type="nucleotide sequence ID" value="NC_008542.1"/>
</dbReference>
<dbReference type="SMR" id="A0K7S6"/>
<dbReference type="KEGG" id="bch:Bcen2424_1802"/>
<dbReference type="HOGENOM" id="CLU_025113_0_1_4"/>
<dbReference type="UniPathway" id="UPA00031">
    <property type="reaction ID" value="UER00006"/>
</dbReference>
<dbReference type="GO" id="GO:0005737">
    <property type="term" value="C:cytoplasm"/>
    <property type="evidence" value="ECO:0007669"/>
    <property type="project" value="UniProtKB-SubCell"/>
</dbReference>
<dbReference type="GO" id="GO:0004821">
    <property type="term" value="F:histidine-tRNA ligase activity"/>
    <property type="evidence" value="ECO:0007669"/>
    <property type="project" value="TreeGrafter"/>
</dbReference>
<dbReference type="GO" id="GO:0006427">
    <property type="term" value="P:histidyl-tRNA aminoacylation"/>
    <property type="evidence" value="ECO:0007669"/>
    <property type="project" value="TreeGrafter"/>
</dbReference>
<dbReference type="GO" id="GO:0000105">
    <property type="term" value="P:L-histidine biosynthetic process"/>
    <property type="evidence" value="ECO:0007669"/>
    <property type="project" value="UniProtKB-UniRule"/>
</dbReference>
<dbReference type="CDD" id="cd00773">
    <property type="entry name" value="HisRS-like_core"/>
    <property type="match status" value="1"/>
</dbReference>
<dbReference type="Gene3D" id="3.30.930.10">
    <property type="entry name" value="Bira Bifunctional Protein, Domain 2"/>
    <property type="match status" value="1"/>
</dbReference>
<dbReference type="HAMAP" id="MF_00125">
    <property type="entry name" value="HisZ"/>
    <property type="match status" value="1"/>
</dbReference>
<dbReference type="InterPro" id="IPR045864">
    <property type="entry name" value="aa-tRNA-synth_II/BPL/LPL"/>
</dbReference>
<dbReference type="InterPro" id="IPR041715">
    <property type="entry name" value="HisRS-like_core"/>
</dbReference>
<dbReference type="InterPro" id="IPR004516">
    <property type="entry name" value="HisRS/HisZ"/>
</dbReference>
<dbReference type="InterPro" id="IPR004517">
    <property type="entry name" value="HisZ"/>
</dbReference>
<dbReference type="NCBIfam" id="TIGR00443">
    <property type="entry name" value="hisZ_biosyn_reg"/>
    <property type="match status" value="1"/>
</dbReference>
<dbReference type="NCBIfam" id="NF008935">
    <property type="entry name" value="PRK12292.1-1"/>
    <property type="match status" value="1"/>
</dbReference>
<dbReference type="NCBIfam" id="NF009086">
    <property type="entry name" value="PRK12421.1"/>
    <property type="match status" value="1"/>
</dbReference>
<dbReference type="PANTHER" id="PTHR43707:SF1">
    <property type="entry name" value="HISTIDINE--TRNA LIGASE, MITOCHONDRIAL-RELATED"/>
    <property type="match status" value="1"/>
</dbReference>
<dbReference type="PANTHER" id="PTHR43707">
    <property type="entry name" value="HISTIDYL-TRNA SYNTHETASE"/>
    <property type="match status" value="1"/>
</dbReference>
<dbReference type="Pfam" id="PF13393">
    <property type="entry name" value="tRNA-synt_His"/>
    <property type="match status" value="1"/>
</dbReference>
<dbReference type="PIRSF" id="PIRSF001549">
    <property type="entry name" value="His-tRNA_synth"/>
    <property type="match status" value="1"/>
</dbReference>
<dbReference type="SUPFAM" id="SSF55681">
    <property type="entry name" value="Class II aaRS and biotin synthetases"/>
    <property type="match status" value="1"/>
</dbReference>